<comment type="function">
    <text evidence="3 6">Probable transcription factor involved in the regulation of the transcription of genes involved in cell rescue and defense, as well as cell cycle and DNA processing.</text>
</comment>
<comment type="subcellular location">
    <subcellularLocation>
        <location evidence="5">Nucleus</location>
    </subcellularLocation>
</comment>
<comment type="disruption phenotype">
    <text evidence="3">Leads to altered expression of 79 genes, including genes related to transcription, genes involving cell rescue and defense, and genes involved in cell cycle and DNA processing.</text>
</comment>
<proteinExistence type="evidence at protein level"/>
<name>CMR3_YEAST</name>
<protein>
    <recommendedName>
        <fullName evidence="4">Zinc finger protein CRM3</fullName>
    </recommendedName>
    <alternativeName>
        <fullName evidence="4">Changed mutation rate protein 3</fullName>
    </alternativeName>
</protein>
<feature type="chain" id="PRO_0000255974" description="Zinc finger protein CRM3">
    <location>
        <begin position="1"/>
        <end position="317"/>
    </location>
</feature>
<feature type="zinc finger region" description="C2H2-type 1" evidence="1">
    <location>
        <begin position="254"/>
        <end position="276"/>
    </location>
</feature>
<feature type="zinc finger region" description="C2H2-type 2" evidence="1">
    <location>
        <begin position="282"/>
        <end position="306"/>
    </location>
</feature>
<feature type="region of interest" description="Disordered" evidence="2">
    <location>
        <begin position="1"/>
        <end position="22"/>
    </location>
</feature>
<feature type="compositionally biased region" description="Low complexity" evidence="2">
    <location>
        <begin position="1"/>
        <end position="15"/>
    </location>
</feature>
<dbReference type="EMBL" id="U31900">
    <property type="protein sequence ID" value="AAA97591.1"/>
    <property type="molecule type" value="Genomic_DNA"/>
</dbReference>
<dbReference type="EMBL" id="Z49919">
    <property type="protein sequence ID" value="CAA90157.1"/>
    <property type="molecule type" value="Genomic_DNA"/>
</dbReference>
<dbReference type="EMBL" id="Z71255">
    <property type="protein sequence ID" value="CAA95009.1"/>
    <property type="molecule type" value="Genomic_DNA"/>
</dbReference>
<dbReference type="EMBL" id="BK006949">
    <property type="protein sequence ID" value="DAA11440.1"/>
    <property type="molecule type" value="Genomic_DNA"/>
</dbReference>
<dbReference type="PIR" id="S57546">
    <property type="entry name" value="S57546"/>
</dbReference>
<dbReference type="RefSeq" id="NP_015338.1">
    <property type="nucleotide sequence ID" value="NM_001184110.1"/>
</dbReference>
<dbReference type="BioGRID" id="36191">
    <property type="interactions" value="120"/>
</dbReference>
<dbReference type="FunCoup" id="Q12145">
    <property type="interactions" value="113"/>
</dbReference>
<dbReference type="IntAct" id="Q12145">
    <property type="interactions" value="8"/>
</dbReference>
<dbReference type="MINT" id="Q12145"/>
<dbReference type="STRING" id="4932.YPR013C"/>
<dbReference type="iPTMnet" id="Q12145"/>
<dbReference type="PaxDb" id="4932-YPR013C"/>
<dbReference type="PeptideAtlas" id="Q12145"/>
<dbReference type="EnsemblFungi" id="YPR013C_mRNA">
    <property type="protein sequence ID" value="YPR013C"/>
    <property type="gene ID" value="YPR013C"/>
</dbReference>
<dbReference type="GeneID" id="856123"/>
<dbReference type="KEGG" id="sce:YPR013C"/>
<dbReference type="AGR" id="SGD:S000006217"/>
<dbReference type="SGD" id="S000006217">
    <property type="gene designation" value="CMR3"/>
</dbReference>
<dbReference type="VEuPathDB" id="FungiDB:YPR013C"/>
<dbReference type="eggNOG" id="KOG1721">
    <property type="taxonomic scope" value="Eukaryota"/>
</dbReference>
<dbReference type="GeneTree" id="ENSGT00940000176618"/>
<dbReference type="HOGENOM" id="CLU_957153_0_0_1"/>
<dbReference type="InParanoid" id="Q12145"/>
<dbReference type="OMA" id="FKCTWEG"/>
<dbReference type="OrthoDB" id="6077919at2759"/>
<dbReference type="BioCyc" id="YEAST:G3O-34174-MONOMER"/>
<dbReference type="BioGRID-ORCS" id="856123">
    <property type="hits" value="0 hits in 13 CRISPR screens"/>
</dbReference>
<dbReference type="PRO" id="PR:Q12145"/>
<dbReference type="Proteomes" id="UP000002311">
    <property type="component" value="Chromosome XVI"/>
</dbReference>
<dbReference type="RNAct" id="Q12145">
    <property type="molecule type" value="protein"/>
</dbReference>
<dbReference type="GO" id="GO:0005634">
    <property type="term" value="C:nucleus"/>
    <property type="evidence" value="ECO:0007669"/>
    <property type="project" value="UniProtKB-SubCell"/>
</dbReference>
<dbReference type="GO" id="GO:0003677">
    <property type="term" value="F:DNA binding"/>
    <property type="evidence" value="ECO:0000314"/>
    <property type="project" value="SGD"/>
</dbReference>
<dbReference type="GO" id="GO:0043565">
    <property type="term" value="F:sequence-specific DNA binding"/>
    <property type="evidence" value="ECO:0007005"/>
    <property type="project" value="SGD"/>
</dbReference>
<dbReference type="GO" id="GO:0008270">
    <property type="term" value="F:zinc ion binding"/>
    <property type="evidence" value="ECO:0007669"/>
    <property type="project" value="UniProtKB-KW"/>
</dbReference>
<dbReference type="FunFam" id="3.30.160.60:FF:000594">
    <property type="entry name" value="Transcription factor HIVEP2"/>
    <property type="match status" value="1"/>
</dbReference>
<dbReference type="FunFam" id="3.30.160.60:FF:002345">
    <property type="entry name" value="YPR013C-like protein"/>
    <property type="match status" value="1"/>
</dbReference>
<dbReference type="Gene3D" id="3.30.160.60">
    <property type="entry name" value="Classic Zinc Finger"/>
    <property type="match status" value="2"/>
</dbReference>
<dbReference type="InterPro" id="IPR036236">
    <property type="entry name" value="Znf_C2H2_sf"/>
</dbReference>
<dbReference type="InterPro" id="IPR013087">
    <property type="entry name" value="Znf_C2H2_type"/>
</dbReference>
<dbReference type="PANTHER" id="PTHR23235">
    <property type="entry name" value="KRUEPPEL-LIKE TRANSCRIPTION FACTOR"/>
    <property type="match status" value="1"/>
</dbReference>
<dbReference type="PANTHER" id="PTHR23235:SF120">
    <property type="entry name" value="KRUPPEL-LIKE FACTOR 15"/>
    <property type="match status" value="1"/>
</dbReference>
<dbReference type="Pfam" id="PF00096">
    <property type="entry name" value="zf-C2H2"/>
    <property type="match status" value="2"/>
</dbReference>
<dbReference type="SMART" id="SM00355">
    <property type="entry name" value="ZnF_C2H2"/>
    <property type="match status" value="2"/>
</dbReference>
<dbReference type="SUPFAM" id="SSF57667">
    <property type="entry name" value="beta-beta-alpha zinc fingers"/>
    <property type="match status" value="2"/>
</dbReference>
<dbReference type="PROSITE" id="PS00028">
    <property type="entry name" value="ZINC_FINGER_C2H2_1"/>
    <property type="match status" value="2"/>
</dbReference>
<dbReference type="PROSITE" id="PS50157">
    <property type="entry name" value="ZINC_FINGER_C2H2_2"/>
    <property type="match status" value="2"/>
</dbReference>
<accession>Q12145</accession>
<accession>D6W424</accession>
<organism>
    <name type="scientific">Saccharomyces cerevisiae (strain ATCC 204508 / S288c)</name>
    <name type="common">Baker's yeast</name>
    <dbReference type="NCBI Taxonomy" id="559292"/>
    <lineage>
        <taxon>Eukaryota</taxon>
        <taxon>Fungi</taxon>
        <taxon>Dikarya</taxon>
        <taxon>Ascomycota</taxon>
        <taxon>Saccharomycotina</taxon>
        <taxon>Saccharomycetes</taxon>
        <taxon>Saccharomycetales</taxon>
        <taxon>Saccharomycetaceae</taxon>
        <taxon>Saccharomyces</taxon>
    </lineage>
</organism>
<gene>
    <name evidence="4" type="primary">CMR3</name>
    <name type="ordered locus">YPR013C</name>
    <name type="ORF">LPZ12c</name>
</gene>
<evidence type="ECO:0000255" key="1">
    <source>
        <dbReference type="PROSITE-ProRule" id="PRU00042"/>
    </source>
</evidence>
<evidence type="ECO:0000256" key="2">
    <source>
        <dbReference type="SAM" id="MobiDB-lite"/>
    </source>
</evidence>
<evidence type="ECO:0000269" key="3">
    <source>
    </source>
</evidence>
<evidence type="ECO:0000303" key="4">
    <source>
    </source>
</evidence>
<evidence type="ECO:0000305" key="5">
    <source>
    </source>
</evidence>
<evidence type="ECO:0000305" key="6">
    <source>
    </source>
</evidence>
<reference key="1">
    <citation type="journal article" date="1997" name="Nature">
        <title>The nucleotide sequence of Saccharomyces cerevisiae chromosome XVI.</title>
        <authorList>
            <person name="Bussey H."/>
            <person name="Storms R.K."/>
            <person name="Ahmed A."/>
            <person name="Albermann K."/>
            <person name="Allen E."/>
            <person name="Ansorge W."/>
            <person name="Araujo R."/>
            <person name="Aparicio A."/>
            <person name="Barrell B.G."/>
            <person name="Badcock K."/>
            <person name="Benes V."/>
            <person name="Botstein D."/>
            <person name="Bowman S."/>
            <person name="Brueckner M."/>
            <person name="Carpenter J."/>
            <person name="Cherry J.M."/>
            <person name="Chung E."/>
            <person name="Churcher C.M."/>
            <person name="Coster F."/>
            <person name="Davis K."/>
            <person name="Davis R.W."/>
            <person name="Dietrich F.S."/>
            <person name="Delius H."/>
            <person name="DiPaolo T."/>
            <person name="Dubois E."/>
            <person name="Duesterhoeft A."/>
            <person name="Duncan M."/>
            <person name="Floeth M."/>
            <person name="Fortin N."/>
            <person name="Friesen J.D."/>
            <person name="Fritz C."/>
            <person name="Goffeau A."/>
            <person name="Hall J."/>
            <person name="Hebling U."/>
            <person name="Heumann K."/>
            <person name="Hilbert H."/>
            <person name="Hillier L.W."/>
            <person name="Hunicke-Smith S."/>
            <person name="Hyman R.W."/>
            <person name="Johnston M."/>
            <person name="Kalman S."/>
            <person name="Kleine K."/>
            <person name="Komp C."/>
            <person name="Kurdi O."/>
            <person name="Lashkari D."/>
            <person name="Lew H."/>
            <person name="Lin A."/>
            <person name="Lin D."/>
            <person name="Louis E.J."/>
            <person name="Marathe R."/>
            <person name="Messenguy F."/>
            <person name="Mewes H.-W."/>
            <person name="Mirtipati S."/>
            <person name="Moestl D."/>
            <person name="Mueller-Auer S."/>
            <person name="Namath A."/>
            <person name="Nentwich U."/>
            <person name="Oefner P."/>
            <person name="Pearson D."/>
            <person name="Petel F.X."/>
            <person name="Pohl T.M."/>
            <person name="Purnelle B."/>
            <person name="Rajandream M.A."/>
            <person name="Rechmann S."/>
            <person name="Rieger M."/>
            <person name="Riles L."/>
            <person name="Roberts D."/>
            <person name="Schaefer M."/>
            <person name="Scharfe M."/>
            <person name="Scherens B."/>
            <person name="Schramm S."/>
            <person name="Schroeder M."/>
            <person name="Sdicu A.-M."/>
            <person name="Tettelin H."/>
            <person name="Urrestarazu L.A."/>
            <person name="Ushinsky S."/>
            <person name="Vierendeels F."/>
            <person name="Vissers S."/>
            <person name="Voss H."/>
            <person name="Walsh S.V."/>
            <person name="Wambutt R."/>
            <person name="Wang Y."/>
            <person name="Wedler E."/>
            <person name="Wedler H."/>
            <person name="Winnett E."/>
            <person name="Zhong W.-W."/>
            <person name="Zollner A."/>
            <person name="Vo D.H."/>
            <person name="Hani J."/>
        </authorList>
    </citation>
    <scope>NUCLEOTIDE SEQUENCE [LARGE SCALE GENOMIC DNA]</scope>
    <source>
        <strain>ATCC 204508 / S288c</strain>
    </source>
</reference>
<reference key="2">
    <citation type="journal article" date="2014" name="G3 (Bethesda)">
        <title>The reference genome sequence of Saccharomyces cerevisiae: Then and now.</title>
        <authorList>
            <person name="Engel S.R."/>
            <person name="Dietrich F.S."/>
            <person name="Fisk D.G."/>
            <person name="Binkley G."/>
            <person name="Balakrishnan R."/>
            <person name="Costanzo M.C."/>
            <person name="Dwight S.S."/>
            <person name="Hitz B.C."/>
            <person name="Karra K."/>
            <person name="Nash R.S."/>
            <person name="Weng S."/>
            <person name="Wong E.D."/>
            <person name="Lloyd P."/>
            <person name="Skrzypek M.S."/>
            <person name="Miyasato S.R."/>
            <person name="Simison M."/>
            <person name="Cherry J.M."/>
        </authorList>
    </citation>
    <scope>GENOME REANNOTATION</scope>
    <source>
        <strain>ATCC 204508 / S288c</strain>
    </source>
</reference>
<reference key="3">
    <citation type="journal article" date="1997" name="Nucleic Acids Res.">
        <title>Variations of the C2H2 zinc finger motif in the yeast genome and classification of yeast zinc finger proteins.</title>
        <authorList>
            <person name="Boehm S."/>
            <person name="Frishman D."/>
            <person name="Mewes H.-W."/>
        </authorList>
    </citation>
    <scope>DOMAIN</scope>
</reference>
<reference key="4">
    <citation type="journal article" date="2008" name="BMC Genomics">
        <title>Transcriptome profiling of Saccharomyces cerevisiae mutants lacking C2H2 zinc finger proteins.</title>
        <authorList>
            <person name="Mao J."/>
            <person name="Habib T."/>
            <person name="Shenwu M."/>
            <person name="Kang B."/>
            <person name="Allen W."/>
            <person name="Robertson L."/>
            <person name="Yang J.Y."/>
            <person name="Deng Y."/>
        </authorList>
    </citation>
    <scope>FUNCTION</scope>
    <scope>DISRUPTION PHENOTYPE</scope>
</reference>
<reference key="5">
    <citation type="journal article" date="2009" name="Science">
        <title>Global analysis of Cdk1 substrate phosphorylation sites provides insights into evolution.</title>
        <authorList>
            <person name="Holt L.J."/>
            <person name="Tuch B.B."/>
            <person name="Villen J."/>
            <person name="Johnson A.D."/>
            <person name="Gygi S.P."/>
            <person name="Morgan D.O."/>
        </authorList>
    </citation>
    <scope>IDENTIFICATION BY MASS SPECTROMETRY [LARGE SCALE ANALYSIS]</scope>
</reference>
<reference key="6">
    <citation type="journal article" date="2012" name="J. Biotechnol.">
        <title>Zinc and yeast stress tolerance: micronutrient plays a big role.</title>
        <authorList>
            <person name="Zhao X.Q."/>
            <person name="Bai F.W."/>
        </authorList>
    </citation>
    <scope>IDENTIFICATION</scope>
    <scope>FUNCTION</scope>
</reference>
<keyword id="KW-0479">Metal-binding</keyword>
<keyword id="KW-0539">Nucleus</keyword>
<keyword id="KW-1185">Reference proteome</keyword>
<keyword id="KW-0677">Repeat</keyword>
<keyword id="KW-0804">Transcription</keyword>
<keyword id="KW-0805">Transcription regulation</keyword>
<keyword id="KW-0862">Zinc</keyword>
<keyword id="KW-0863">Zinc-finger</keyword>
<sequence length="317" mass="35358">MNFSLSKQSSEKQSSYTDKSRSPNIGMCTVNYKSNLPLQVSAVDQLSTGKGTQFYGHNSYKNERECYNSTKINLPPISSLLPNFENNTPPNVDSRVQFPPQQVYQSMNVVPIVNEIYTPISMNATSDQYPIYYTESQQPIPHSQSPHLTSSAPLMMPVMVPTVYKPLTPYDKEPITIASEPNFTAISMASHPNAALELCHDRPKSVPPGYGVLPTMQEASNGRTKSEPGAVLNGSATFSDWKTDTRISSTKLRKQCPVCGKICSRPSTLKTHYLIHTGDTPFKCTWEGCTKSFNVKSNMLRHLKSHERKRNKVLNTT</sequence>